<accession>Q99UJ9</accession>
<sequence>MAISQERKNEIIKEYRVHETDTGSPEVQIAVLTAEINAVNEHLRTHKKDHHSRRGLLKMVGRRRHLLNYLRSKDIQRYRELIKSLGIRR</sequence>
<dbReference type="EMBL" id="BA000017">
    <property type="protein sequence ID" value="BAB57435.1"/>
    <property type="molecule type" value="Genomic_DNA"/>
</dbReference>
<dbReference type="RefSeq" id="WP_001018328.1">
    <property type="nucleotide sequence ID" value="NC_002758.2"/>
</dbReference>
<dbReference type="SMR" id="Q99UJ9"/>
<dbReference type="KEGG" id="sav:SAV1273"/>
<dbReference type="HOGENOM" id="CLU_148518_0_0_9"/>
<dbReference type="PhylomeDB" id="Q99UJ9"/>
<dbReference type="Proteomes" id="UP000002481">
    <property type="component" value="Chromosome"/>
</dbReference>
<dbReference type="GO" id="GO:0022627">
    <property type="term" value="C:cytosolic small ribosomal subunit"/>
    <property type="evidence" value="ECO:0007669"/>
    <property type="project" value="TreeGrafter"/>
</dbReference>
<dbReference type="GO" id="GO:0019843">
    <property type="term" value="F:rRNA binding"/>
    <property type="evidence" value="ECO:0007669"/>
    <property type="project" value="UniProtKB-UniRule"/>
</dbReference>
<dbReference type="GO" id="GO:0003735">
    <property type="term" value="F:structural constituent of ribosome"/>
    <property type="evidence" value="ECO:0007669"/>
    <property type="project" value="InterPro"/>
</dbReference>
<dbReference type="GO" id="GO:0006412">
    <property type="term" value="P:translation"/>
    <property type="evidence" value="ECO:0007669"/>
    <property type="project" value="UniProtKB-UniRule"/>
</dbReference>
<dbReference type="CDD" id="cd00353">
    <property type="entry name" value="Ribosomal_S15p_S13e"/>
    <property type="match status" value="1"/>
</dbReference>
<dbReference type="FunFam" id="1.10.287.10:FF:000002">
    <property type="entry name" value="30S ribosomal protein S15"/>
    <property type="match status" value="1"/>
</dbReference>
<dbReference type="Gene3D" id="6.10.250.3130">
    <property type="match status" value="1"/>
</dbReference>
<dbReference type="Gene3D" id="1.10.287.10">
    <property type="entry name" value="S15/NS1, RNA-binding"/>
    <property type="match status" value="1"/>
</dbReference>
<dbReference type="HAMAP" id="MF_01343_B">
    <property type="entry name" value="Ribosomal_uS15_B"/>
    <property type="match status" value="1"/>
</dbReference>
<dbReference type="InterPro" id="IPR000589">
    <property type="entry name" value="Ribosomal_uS15"/>
</dbReference>
<dbReference type="InterPro" id="IPR005290">
    <property type="entry name" value="Ribosomal_uS15_bac-type"/>
</dbReference>
<dbReference type="InterPro" id="IPR009068">
    <property type="entry name" value="uS15_NS1_RNA-bd_sf"/>
</dbReference>
<dbReference type="NCBIfam" id="TIGR00952">
    <property type="entry name" value="S15_bact"/>
    <property type="match status" value="1"/>
</dbReference>
<dbReference type="PANTHER" id="PTHR23321">
    <property type="entry name" value="RIBOSOMAL PROTEIN S15, BACTERIAL AND ORGANELLAR"/>
    <property type="match status" value="1"/>
</dbReference>
<dbReference type="PANTHER" id="PTHR23321:SF26">
    <property type="entry name" value="SMALL RIBOSOMAL SUBUNIT PROTEIN US15M"/>
    <property type="match status" value="1"/>
</dbReference>
<dbReference type="Pfam" id="PF00312">
    <property type="entry name" value="Ribosomal_S15"/>
    <property type="match status" value="1"/>
</dbReference>
<dbReference type="SMART" id="SM01387">
    <property type="entry name" value="Ribosomal_S15"/>
    <property type="match status" value="1"/>
</dbReference>
<dbReference type="SUPFAM" id="SSF47060">
    <property type="entry name" value="S15/NS1 RNA-binding domain"/>
    <property type="match status" value="1"/>
</dbReference>
<dbReference type="PROSITE" id="PS00362">
    <property type="entry name" value="RIBOSOMAL_S15"/>
    <property type="match status" value="1"/>
</dbReference>
<evidence type="ECO:0000255" key="1">
    <source>
        <dbReference type="HAMAP-Rule" id="MF_01343"/>
    </source>
</evidence>
<evidence type="ECO:0000305" key="2"/>
<comment type="function">
    <text evidence="1">One of the primary rRNA binding proteins, it binds directly to 16S rRNA where it helps nucleate assembly of the platform of the 30S subunit by binding and bridging several RNA helices of the 16S rRNA.</text>
</comment>
<comment type="function">
    <text evidence="1">Forms an intersubunit bridge (bridge B4) with the 23S rRNA of the 50S subunit in the ribosome.</text>
</comment>
<comment type="subunit">
    <text evidence="1">Part of the 30S ribosomal subunit. Forms a bridge to the 50S subunit in the 70S ribosome, contacting the 23S rRNA.</text>
</comment>
<comment type="similarity">
    <text evidence="1">Belongs to the universal ribosomal protein uS15 family.</text>
</comment>
<reference key="1">
    <citation type="journal article" date="2001" name="Lancet">
        <title>Whole genome sequencing of meticillin-resistant Staphylococcus aureus.</title>
        <authorList>
            <person name="Kuroda M."/>
            <person name="Ohta T."/>
            <person name="Uchiyama I."/>
            <person name="Baba T."/>
            <person name="Yuzawa H."/>
            <person name="Kobayashi I."/>
            <person name="Cui L."/>
            <person name="Oguchi A."/>
            <person name="Aoki K."/>
            <person name="Nagai Y."/>
            <person name="Lian J.-Q."/>
            <person name="Ito T."/>
            <person name="Kanamori M."/>
            <person name="Matsumaru H."/>
            <person name="Maruyama A."/>
            <person name="Murakami H."/>
            <person name="Hosoyama A."/>
            <person name="Mizutani-Ui Y."/>
            <person name="Takahashi N.K."/>
            <person name="Sawano T."/>
            <person name="Inoue R."/>
            <person name="Kaito C."/>
            <person name="Sekimizu K."/>
            <person name="Hirakawa H."/>
            <person name="Kuhara S."/>
            <person name="Goto S."/>
            <person name="Yabuzaki J."/>
            <person name="Kanehisa M."/>
            <person name="Yamashita A."/>
            <person name="Oshima K."/>
            <person name="Furuya K."/>
            <person name="Yoshino C."/>
            <person name="Shiba T."/>
            <person name="Hattori M."/>
            <person name="Ogasawara N."/>
            <person name="Hayashi H."/>
            <person name="Hiramatsu K."/>
        </authorList>
    </citation>
    <scope>NUCLEOTIDE SEQUENCE [LARGE SCALE GENOMIC DNA]</scope>
    <source>
        <strain>Mu50 / ATCC 700699</strain>
    </source>
</reference>
<keyword id="KW-0687">Ribonucleoprotein</keyword>
<keyword id="KW-0689">Ribosomal protein</keyword>
<keyword id="KW-0694">RNA-binding</keyword>
<keyword id="KW-0699">rRNA-binding</keyword>
<proteinExistence type="inferred from homology"/>
<gene>
    <name evidence="1" type="primary">rpsO</name>
    <name type="ordered locus">SAV1273</name>
</gene>
<organism>
    <name type="scientific">Staphylococcus aureus (strain Mu50 / ATCC 700699)</name>
    <dbReference type="NCBI Taxonomy" id="158878"/>
    <lineage>
        <taxon>Bacteria</taxon>
        <taxon>Bacillati</taxon>
        <taxon>Bacillota</taxon>
        <taxon>Bacilli</taxon>
        <taxon>Bacillales</taxon>
        <taxon>Staphylococcaceae</taxon>
        <taxon>Staphylococcus</taxon>
    </lineage>
</organism>
<feature type="chain" id="PRO_0000115542" description="Small ribosomal subunit protein uS15">
    <location>
        <begin position="1"/>
        <end position="89"/>
    </location>
</feature>
<name>RS15_STAAM</name>
<protein>
    <recommendedName>
        <fullName evidence="1">Small ribosomal subunit protein uS15</fullName>
    </recommendedName>
    <alternativeName>
        <fullName evidence="2">30S ribosomal protein S15</fullName>
    </alternativeName>
</protein>